<feature type="chain" id="PRO_0000308237" description="Squamosa promoter-binding-like protein 11">
    <location>
        <begin position="1"/>
        <end position="343"/>
    </location>
</feature>
<feature type="zinc finger region" description="SBP-type" evidence="3">
    <location>
        <begin position="64"/>
        <end position="141"/>
    </location>
</feature>
<feature type="region of interest" description="Disordered" evidence="4">
    <location>
        <begin position="1"/>
        <end position="48"/>
    </location>
</feature>
<feature type="short sequence motif" description="Bipartite nuclear localization signal" evidence="2">
    <location>
        <begin position="124"/>
        <end position="140"/>
    </location>
</feature>
<feature type="compositionally biased region" description="Low complexity" evidence="4">
    <location>
        <begin position="7"/>
        <end position="19"/>
    </location>
</feature>
<feature type="compositionally biased region" description="Low complexity" evidence="4">
    <location>
        <begin position="37"/>
        <end position="48"/>
    </location>
</feature>
<feature type="binding site" evidence="3">
    <location>
        <position position="67"/>
    </location>
    <ligand>
        <name>Zn(2+)</name>
        <dbReference type="ChEBI" id="CHEBI:29105"/>
        <label>1</label>
    </ligand>
</feature>
<feature type="binding site" evidence="3">
    <location>
        <position position="72"/>
    </location>
    <ligand>
        <name>Zn(2+)</name>
        <dbReference type="ChEBI" id="CHEBI:29105"/>
        <label>1</label>
    </ligand>
</feature>
<feature type="binding site" evidence="3">
    <location>
        <position position="89"/>
    </location>
    <ligand>
        <name>Zn(2+)</name>
        <dbReference type="ChEBI" id="CHEBI:29105"/>
        <label>1</label>
    </ligand>
</feature>
<feature type="binding site" evidence="3">
    <location>
        <position position="92"/>
    </location>
    <ligand>
        <name>Zn(2+)</name>
        <dbReference type="ChEBI" id="CHEBI:29105"/>
        <label>1</label>
    </ligand>
</feature>
<feature type="binding site" evidence="3">
    <location>
        <position position="108"/>
    </location>
    <ligand>
        <name>Zn(2+)</name>
        <dbReference type="ChEBI" id="CHEBI:29105"/>
        <label>2</label>
    </ligand>
</feature>
<feature type="binding site" evidence="3">
    <location>
        <position position="111"/>
    </location>
    <ligand>
        <name>Zn(2+)</name>
        <dbReference type="ChEBI" id="CHEBI:29105"/>
        <label>2</label>
    </ligand>
</feature>
<feature type="binding site" evidence="3">
    <location>
        <position position="115"/>
    </location>
    <ligand>
        <name>Zn(2+)</name>
        <dbReference type="ChEBI" id="CHEBI:29105"/>
        <label>2</label>
    </ligand>
</feature>
<feature type="binding site" evidence="3">
    <location>
        <position position="127"/>
    </location>
    <ligand>
        <name>Zn(2+)</name>
        <dbReference type="ChEBI" id="CHEBI:29105"/>
        <label>2</label>
    </ligand>
</feature>
<accession>Q653Z5</accession>
<accession>A0A0P0WZY6</accession>
<proteinExistence type="evidence at transcript level"/>
<name>SPL11_ORYSJ</name>
<comment type="function">
    <text evidence="1">Trans-acting factor that binds specifically to the consensus nucleotide sequence 5'-TNCGTACAA-3' (By similarity). May be involved in panicle development.</text>
</comment>
<comment type="subcellular location">
    <subcellularLocation>
        <location evidence="6">Nucleus</location>
    </subcellularLocation>
</comment>
<comment type="tissue specificity">
    <text evidence="5">Expressed in stems, leaf sheaths, and young panicles.</text>
</comment>
<comment type="domain">
    <text evidence="1">The SBP-type zinc finger is required for the binding to DNA.</text>
</comment>
<sequence>MECNPVSSTTSSSLLWDWDATASAEPPPPPGKRGGRDSSSASASAKRGRSAAAAGDAAAVAAEAPRCQVEGCGLELGGYKEYYRKHRVCEPHTKCLRVVVAGQDRRFCQQCSRFHAPSEFDQEKRSCRRRLSDHNARRRKPQTDVFAFGSGTLPRSLFDDRQQISFAWDNNAPLNHANTTSSSSWTSDLQLSQVMDISKRSRKAGADSANIRLSNALPTLCHDTNELLPIKGADASETASKLDGALDVQRALSLLSASSRGLTDPGHQTSSIIQFTNSNQNSTLPSVPSEGNSNVPFWVDGQHQAVEPQVFQFTMDTGNTVFPDLERIKPSYESSMFGLNQIH</sequence>
<organism>
    <name type="scientific">Oryza sativa subsp. japonica</name>
    <name type="common">Rice</name>
    <dbReference type="NCBI Taxonomy" id="39947"/>
    <lineage>
        <taxon>Eukaryota</taxon>
        <taxon>Viridiplantae</taxon>
        <taxon>Streptophyta</taxon>
        <taxon>Embryophyta</taxon>
        <taxon>Tracheophyta</taxon>
        <taxon>Spermatophyta</taxon>
        <taxon>Magnoliopsida</taxon>
        <taxon>Liliopsida</taxon>
        <taxon>Poales</taxon>
        <taxon>Poaceae</taxon>
        <taxon>BOP clade</taxon>
        <taxon>Oryzoideae</taxon>
        <taxon>Oryzeae</taxon>
        <taxon>Oryzinae</taxon>
        <taxon>Oryza</taxon>
        <taxon>Oryza sativa</taxon>
    </lineage>
</organism>
<keyword id="KW-0238">DNA-binding</keyword>
<keyword id="KW-0479">Metal-binding</keyword>
<keyword id="KW-0539">Nucleus</keyword>
<keyword id="KW-1185">Reference proteome</keyword>
<keyword id="KW-0804">Transcription</keyword>
<keyword id="KW-0805">Transcription regulation</keyword>
<keyword id="KW-0862">Zinc</keyword>
<keyword id="KW-0863">Zinc-finger</keyword>
<reference key="1">
    <citation type="journal article" date="2005" name="Nature">
        <title>The map-based sequence of the rice genome.</title>
        <authorList>
            <consortium name="International rice genome sequencing project (IRGSP)"/>
        </authorList>
    </citation>
    <scope>NUCLEOTIDE SEQUENCE [LARGE SCALE GENOMIC DNA]</scope>
    <source>
        <strain>cv. Nipponbare</strain>
    </source>
</reference>
<reference key="2">
    <citation type="journal article" date="2008" name="Nucleic Acids Res.">
        <title>The rice annotation project database (RAP-DB): 2008 update.</title>
        <authorList>
            <consortium name="The rice annotation project (RAP)"/>
        </authorList>
    </citation>
    <scope>GENOME REANNOTATION</scope>
    <source>
        <strain>cv. Nipponbare</strain>
    </source>
</reference>
<reference key="3">
    <citation type="journal article" date="2013" name="Rice">
        <title>Improvement of the Oryza sativa Nipponbare reference genome using next generation sequence and optical map data.</title>
        <authorList>
            <person name="Kawahara Y."/>
            <person name="de la Bastide M."/>
            <person name="Hamilton J.P."/>
            <person name="Kanamori H."/>
            <person name="McCombie W.R."/>
            <person name="Ouyang S."/>
            <person name="Schwartz D.C."/>
            <person name="Tanaka T."/>
            <person name="Wu J."/>
            <person name="Zhou S."/>
            <person name="Childs K.L."/>
            <person name="Davidson R.M."/>
            <person name="Lin H."/>
            <person name="Quesada-Ocampo L."/>
            <person name="Vaillancourt B."/>
            <person name="Sakai H."/>
            <person name="Lee S.S."/>
            <person name="Kim J."/>
            <person name="Numa H."/>
            <person name="Itoh T."/>
            <person name="Buell C.R."/>
            <person name="Matsumoto T."/>
        </authorList>
    </citation>
    <scope>GENOME REANNOTATION</scope>
    <source>
        <strain>cv. Nipponbare</strain>
    </source>
</reference>
<reference key="4">
    <citation type="journal article" date="2005" name="PLoS Biol.">
        <title>The genomes of Oryza sativa: a history of duplications.</title>
        <authorList>
            <person name="Yu J."/>
            <person name="Wang J."/>
            <person name="Lin W."/>
            <person name="Li S."/>
            <person name="Li H."/>
            <person name="Zhou J."/>
            <person name="Ni P."/>
            <person name="Dong W."/>
            <person name="Hu S."/>
            <person name="Zeng C."/>
            <person name="Zhang J."/>
            <person name="Zhang Y."/>
            <person name="Li R."/>
            <person name="Xu Z."/>
            <person name="Li S."/>
            <person name="Li X."/>
            <person name="Zheng H."/>
            <person name="Cong L."/>
            <person name="Lin L."/>
            <person name="Yin J."/>
            <person name="Geng J."/>
            <person name="Li G."/>
            <person name="Shi J."/>
            <person name="Liu J."/>
            <person name="Lv H."/>
            <person name="Li J."/>
            <person name="Wang J."/>
            <person name="Deng Y."/>
            <person name="Ran L."/>
            <person name="Shi X."/>
            <person name="Wang X."/>
            <person name="Wu Q."/>
            <person name="Li C."/>
            <person name="Ren X."/>
            <person name="Wang J."/>
            <person name="Wang X."/>
            <person name="Li D."/>
            <person name="Liu D."/>
            <person name="Zhang X."/>
            <person name="Ji Z."/>
            <person name="Zhao W."/>
            <person name="Sun Y."/>
            <person name="Zhang Z."/>
            <person name="Bao J."/>
            <person name="Han Y."/>
            <person name="Dong L."/>
            <person name="Ji J."/>
            <person name="Chen P."/>
            <person name="Wu S."/>
            <person name="Liu J."/>
            <person name="Xiao Y."/>
            <person name="Bu D."/>
            <person name="Tan J."/>
            <person name="Yang L."/>
            <person name="Ye C."/>
            <person name="Zhang J."/>
            <person name="Xu J."/>
            <person name="Zhou Y."/>
            <person name="Yu Y."/>
            <person name="Zhang B."/>
            <person name="Zhuang S."/>
            <person name="Wei H."/>
            <person name="Liu B."/>
            <person name="Lei M."/>
            <person name="Yu H."/>
            <person name="Li Y."/>
            <person name="Xu H."/>
            <person name="Wei S."/>
            <person name="He X."/>
            <person name="Fang L."/>
            <person name="Zhang Z."/>
            <person name="Zhang Y."/>
            <person name="Huang X."/>
            <person name="Su Z."/>
            <person name="Tong W."/>
            <person name="Li J."/>
            <person name="Tong Z."/>
            <person name="Li S."/>
            <person name="Ye J."/>
            <person name="Wang L."/>
            <person name="Fang L."/>
            <person name="Lei T."/>
            <person name="Chen C.-S."/>
            <person name="Chen H.-C."/>
            <person name="Xu Z."/>
            <person name="Li H."/>
            <person name="Huang H."/>
            <person name="Zhang F."/>
            <person name="Xu H."/>
            <person name="Li N."/>
            <person name="Zhao C."/>
            <person name="Li S."/>
            <person name="Dong L."/>
            <person name="Huang Y."/>
            <person name="Li L."/>
            <person name="Xi Y."/>
            <person name="Qi Q."/>
            <person name="Li W."/>
            <person name="Zhang B."/>
            <person name="Hu W."/>
            <person name="Zhang Y."/>
            <person name="Tian X."/>
            <person name="Jiao Y."/>
            <person name="Liang X."/>
            <person name="Jin J."/>
            <person name="Gao L."/>
            <person name="Zheng W."/>
            <person name="Hao B."/>
            <person name="Liu S.-M."/>
            <person name="Wang W."/>
            <person name="Yuan L."/>
            <person name="Cao M."/>
            <person name="McDermott J."/>
            <person name="Samudrala R."/>
            <person name="Wang J."/>
            <person name="Wong G.K.-S."/>
            <person name="Yang H."/>
        </authorList>
    </citation>
    <scope>NUCLEOTIDE SEQUENCE [LARGE SCALE GENOMIC DNA]</scope>
    <source>
        <strain>cv. Nipponbare</strain>
    </source>
</reference>
<reference key="5">
    <citation type="journal article" date="2006" name="Plant Physiol.">
        <title>Genomic organization, differential expression, and interaction of SQUAMOSA promoter-binding-like transcription factors and microRNA156 in rice.</title>
        <authorList>
            <person name="Xie K."/>
            <person name="Wu C."/>
            <person name="Xiong L."/>
        </authorList>
    </citation>
    <scope>TISSUE SPECIFICITY</scope>
    <scope>GENE FAMILY</scope>
    <scope>NOMENCLATURE</scope>
</reference>
<reference key="6">
    <citation type="journal article" date="2008" name="Gene">
        <title>Comparative study of SBP-box gene family in Arabidopsis and rice.</title>
        <authorList>
            <person name="Yang Z."/>
            <person name="Wang X."/>
            <person name="Gu S."/>
            <person name="Hu Z."/>
            <person name="Xu H."/>
            <person name="Xu C."/>
        </authorList>
    </citation>
    <scope>GENE FAMILY</scope>
</reference>
<gene>
    <name type="primary">SPL11</name>
    <name type="ordered locus">Os06g0663500</name>
    <name type="ordered locus">LOC_Os06g45310</name>
    <name type="ORF">OsJ_021400</name>
    <name type="ORF">OSJNBb0065C04.42</name>
</gene>
<protein>
    <recommendedName>
        <fullName>Squamosa promoter-binding-like protein 11</fullName>
    </recommendedName>
</protein>
<evidence type="ECO:0000250" key="1"/>
<evidence type="ECO:0000255" key="2"/>
<evidence type="ECO:0000255" key="3">
    <source>
        <dbReference type="PROSITE-ProRule" id="PRU00470"/>
    </source>
</evidence>
<evidence type="ECO:0000256" key="4">
    <source>
        <dbReference type="SAM" id="MobiDB-lite"/>
    </source>
</evidence>
<evidence type="ECO:0000269" key="5">
    <source>
    </source>
</evidence>
<evidence type="ECO:0000305" key="6"/>
<dbReference type="EMBL" id="AP004744">
    <property type="protein sequence ID" value="BAD45872.1"/>
    <property type="molecule type" value="Genomic_DNA"/>
</dbReference>
<dbReference type="EMBL" id="AP008212">
    <property type="protein sequence ID" value="BAF20206.1"/>
    <property type="molecule type" value="Genomic_DNA"/>
</dbReference>
<dbReference type="EMBL" id="AP014962">
    <property type="protein sequence ID" value="BAS99010.1"/>
    <property type="molecule type" value="Genomic_DNA"/>
</dbReference>
<dbReference type="EMBL" id="CM000143">
    <property type="protein sequence ID" value="EAZ37917.1"/>
    <property type="molecule type" value="Genomic_DNA"/>
</dbReference>
<dbReference type="RefSeq" id="XP_015641499.1">
    <property type="nucleotide sequence ID" value="XM_015786013.1"/>
</dbReference>
<dbReference type="SMR" id="Q653Z5"/>
<dbReference type="PaxDb" id="39947-Q653Z5"/>
<dbReference type="EnsemblPlants" id="Os06t0663500-00">
    <property type="protein sequence ID" value="Os06t0663500-00"/>
    <property type="gene ID" value="Os06g0663500"/>
</dbReference>
<dbReference type="Gramene" id="Os06t0663500-00">
    <property type="protein sequence ID" value="Os06t0663500-00"/>
    <property type="gene ID" value="Os06g0663500"/>
</dbReference>
<dbReference type="eggNOG" id="ENOG502SKF7">
    <property type="taxonomic scope" value="Eukaryota"/>
</dbReference>
<dbReference type="HOGENOM" id="CLU_026055_0_0_1"/>
<dbReference type="InParanoid" id="Q653Z5"/>
<dbReference type="OMA" id="FNHANTT"/>
<dbReference type="OrthoDB" id="514967at2759"/>
<dbReference type="Proteomes" id="UP000000763">
    <property type="component" value="Chromosome 6"/>
</dbReference>
<dbReference type="Proteomes" id="UP000007752">
    <property type="component" value="Chromosome 6"/>
</dbReference>
<dbReference type="Proteomes" id="UP000059680">
    <property type="component" value="Chromosome 6"/>
</dbReference>
<dbReference type="GO" id="GO:0005634">
    <property type="term" value="C:nucleus"/>
    <property type="evidence" value="ECO:0007669"/>
    <property type="project" value="UniProtKB-SubCell"/>
</dbReference>
<dbReference type="GO" id="GO:0003677">
    <property type="term" value="F:DNA binding"/>
    <property type="evidence" value="ECO:0007669"/>
    <property type="project" value="UniProtKB-KW"/>
</dbReference>
<dbReference type="GO" id="GO:0008270">
    <property type="term" value="F:zinc ion binding"/>
    <property type="evidence" value="ECO:0007669"/>
    <property type="project" value="UniProtKB-KW"/>
</dbReference>
<dbReference type="Gene3D" id="4.10.1100.10">
    <property type="entry name" value="Transcription factor, SBP-box domain"/>
    <property type="match status" value="1"/>
</dbReference>
<dbReference type="InterPro" id="IPR044817">
    <property type="entry name" value="SBP-like"/>
</dbReference>
<dbReference type="InterPro" id="IPR004333">
    <property type="entry name" value="SBP_dom"/>
</dbReference>
<dbReference type="InterPro" id="IPR036893">
    <property type="entry name" value="SBP_sf"/>
</dbReference>
<dbReference type="PANTHER" id="PTHR31251:SF209">
    <property type="entry name" value="SQUAMOSA PROMOTER-BINDING-LIKE PROTEIN 13"/>
    <property type="match status" value="1"/>
</dbReference>
<dbReference type="PANTHER" id="PTHR31251">
    <property type="entry name" value="SQUAMOSA PROMOTER-BINDING-LIKE PROTEIN 4"/>
    <property type="match status" value="1"/>
</dbReference>
<dbReference type="Pfam" id="PF03110">
    <property type="entry name" value="SBP"/>
    <property type="match status" value="1"/>
</dbReference>
<dbReference type="SUPFAM" id="SSF103612">
    <property type="entry name" value="SBT domain"/>
    <property type="match status" value="1"/>
</dbReference>
<dbReference type="PROSITE" id="PS51141">
    <property type="entry name" value="ZF_SBP"/>
    <property type="match status" value="1"/>
</dbReference>